<reference key="1">
    <citation type="journal article" date="2011" name="Proc. Natl. Acad. Sci. U.S.A.">
        <title>Genomic anatomy of Escherichia coli O157:H7 outbreaks.</title>
        <authorList>
            <person name="Eppinger M."/>
            <person name="Mammel M.K."/>
            <person name="Leclerc J.E."/>
            <person name="Ravel J."/>
            <person name="Cebula T.A."/>
        </authorList>
    </citation>
    <scope>NUCLEOTIDE SEQUENCE [LARGE SCALE GENOMIC DNA]</scope>
    <source>
        <strain>EC4115 / EHEC</strain>
    </source>
</reference>
<feature type="chain" id="PRO_1000089561" description="LexA repressor">
    <location>
        <begin position="1"/>
        <end position="202"/>
    </location>
</feature>
<feature type="DNA-binding region" description="H-T-H motif" evidence="1">
    <location>
        <begin position="28"/>
        <end position="48"/>
    </location>
</feature>
<feature type="active site" description="For autocatalytic cleavage activity" evidence="1">
    <location>
        <position position="119"/>
    </location>
</feature>
<feature type="active site" description="For autocatalytic cleavage activity" evidence="1">
    <location>
        <position position="156"/>
    </location>
</feature>
<feature type="site" description="Cleavage; by autolysis" evidence="1">
    <location>
        <begin position="84"/>
        <end position="85"/>
    </location>
</feature>
<sequence>MKALTARQQEVFDLIRDHISQTGMPPTRAEIAQRLGFRSPNAAEEHLKALARKGVIEIVSGASRGIRLLQEEEEGLPLVGRVAAGEPLLAQQHIEGHYQVDPSLFKPNADFLLRVSGMSMKDIGIMDGDLLAVHKTQDVRNGQVVVARIDDEVTVKRLKKQGNKVELLPENSEFKPIVVDLRQQSFTIEGLAVGVIRNGDWL</sequence>
<name>LEXA_ECO5E</name>
<accession>B5Z184</accession>
<organism>
    <name type="scientific">Escherichia coli O157:H7 (strain EC4115 / EHEC)</name>
    <dbReference type="NCBI Taxonomy" id="444450"/>
    <lineage>
        <taxon>Bacteria</taxon>
        <taxon>Pseudomonadati</taxon>
        <taxon>Pseudomonadota</taxon>
        <taxon>Gammaproteobacteria</taxon>
        <taxon>Enterobacterales</taxon>
        <taxon>Enterobacteriaceae</taxon>
        <taxon>Escherichia</taxon>
    </lineage>
</organism>
<proteinExistence type="inferred from homology"/>
<comment type="function">
    <text evidence="1">Represses a number of genes involved in the response to DNA damage (SOS response), including recA and lexA. Binds to the 16 bp palindromic sequence 5'-CTGTATATATATACAG-3'. In the presence of single-stranded DNA, RecA interacts with LexA causing an autocatalytic cleavage which disrupts the DNA-binding part of LexA, leading to derepression of the SOS regulon and eventually DNA repair.</text>
</comment>
<comment type="catalytic activity">
    <reaction evidence="1">
        <text>Hydrolysis of Ala-|-Gly bond in repressor LexA.</text>
        <dbReference type="EC" id="3.4.21.88"/>
    </reaction>
</comment>
<comment type="subunit">
    <text evidence="1">Homodimer.</text>
</comment>
<comment type="similarity">
    <text evidence="1">Belongs to the peptidase S24 family.</text>
</comment>
<gene>
    <name evidence="1" type="primary">lexA</name>
    <name type="ordered locus">ECH74115_5524</name>
</gene>
<dbReference type="EC" id="3.4.21.88" evidence="1"/>
<dbReference type="EMBL" id="CP001164">
    <property type="protein sequence ID" value="ACI39818.1"/>
    <property type="molecule type" value="Genomic_DNA"/>
</dbReference>
<dbReference type="RefSeq" id="WP_000646078.1">
    <property type="nucleotide sequence ID" value="NC_011353.1"/>
</dbReference>
<dbReference type="SMR" id="B5Z184"/>
<dbReference type="MEROPS" id="S24.001"/>
<dbReference type="GeneID" id="93777788"/>
<dbReference type="KEGG" id="ecf:ECH74115_5524"/>
<dbReference type="HOGENOM" id="CLU_066192_45_3_6"/>
<dbReference type="GO" id="GO:0003677">
    <property type="term" value="F:DNA binding"/>
    <property type="evidence" value="ECO:0007669"/>
    <property type="project" value="UniProtKB-UniRule"/>
</dbReference>
<dbReference type="GO" id="GO:0004252">
    <property type="term" value="F:serine-type endopeptidase activity"/>
    <property type="evidence" value="ECO:0007669"/>
    <property type="project" value="UniProtKB-UniRule"/>
</dbReference>
<dbReference type="GO" id="GO:0006281">
    <property type="term" value="P:DNA repair"/>
    <property type="evidence" value="ECO:0007669"/>
    <property type="project" value="UniProtKB-UniRule"/>
</dbReference>
<dbReference type="GO" id="GO:0006260">
    <property type="term" value="P:DNA replication"/>
    <property type="evidence" value="ECO:0007669"/>
    <property type="project" value="UniProtKB-UniRule"/>
</dbReference>
<dbReference type="GO" id="GO:0045892">
    <property type="term" value="P:negative regulation of DNA-templated transcription"/>
    <property type="evidence" value="ECO:0007669"/>
    <property type="project" value="UniProtKB-UniRule"/>
</dbReference>
<dbReference type="GO" id="GO:0006508">
    <property type="term" value="P:proteolysis"/>
    <property type="evidence" value="ECO:0007669"/>
    <property type="project" value="InterPro"/>
</dbReference>
<dbReference type="GO" id="GO:0009432">
    <property type="term" value="P:SOS response"/>
    <property type="evidence" value="ECO:0007669"/>
    <property type="project" value="UniProtKB-UniRule"/>
</dbReference>
<dbReference type="CDD" id="cd06529">
    <property type="entry name" value="S24_LexA-like"/>
    <property type="match status" value="1"/>
</dbReference>
<dbReference type="FunFam" id="1.10.10.10:FF:000009">
    <property type="entry name" value="LexA repressor"/>
    <property type="match status" value="1"/>
</dbReference>
<dbReference type="FunFam" id="2.10.109.10:FF:000001">
    <property type="entry name" value="LexA repressor"/>
    <property type="match status" value="1"/>
</dbReference>
<dbReference type="Gene3D" id="2.10.109.10">
    <property type="entry name" value="Umud Fragment, subunit A"/>
    <property type="match status" value="1"/>
</dbReference>
<dbReference type="Gene3D" id="1.10.10.10">
    <property type="entry name" value="Winged helix-like DNA-binding domain superfamily/Winged helix DNA-binding domain"/>
    <property type="match status" value="1"/>
</dbReference>
<dbReference type="HAMAP" id="MF_00015">
    <property type="entry name" value="LexA"/>
    <property type="match status" value="1"/>
</dbReference>
<dbReference type="InterPro" id="IPR006200">
    <property type="entry name" value="LexA"/>
</dbReference>
<dbReference type="InterPro" id="IPR039418">
    <property type="entry name" value="LexA-like"/>
</dbReference>
<dbReference type="InterPro" id="IPR036286">
    <property type="entry name" value="LexA/Signal_pep-like_sf"/>
</dbReference>
<dbReference type="InterPro" id="IPR006199">
    <property type="entry name" value="LexA_DNA-bd_dom"/>
</dbReference>
<dbReference type="InterPro" id="IPR050077">
    <property type="entry name" value="LexA_repressor"/>
</dbReference>
<dbReference type="InterPro" id="IPR006197">
    <property type="entry name" value="Peptidase_S24_LexA"/>
</dbReference>
<dbReference type="InterPro" id="IPR015927">
    <property type="entry name" value="Peptidase_S24_S26A/B/C"/>
</dbReference>
<dbReference type="InterPro" id="IPR036388">
    <property type="entry name" value="WH-like_DNA-bd_sf"/>
</dbReference>
<dbReference type="InterPro" id="IPR036390">
    <property type="entry name" value="WH_DNA-bd_sf"/>
</dbReference>
<dbReference type="NCBIfam" id="TIGR00498">
    <property type="entry name" value="lexA"/>
    <property type="match status" value="1"/>
</dbReference>
<dbReference type="PANTHER" id="PTHR33516">
    <property type="entry name" value="LEXA REPRESSOR"/>
    <property type="match status" value="1"/>
</dbReference>
<dbReference type="PANTHER" id="PTHR33516:SF2">
    <property type="entry name" value="LEXA REPRESSOR-RELATED"/>
    <property type="match status" value="1"/>
</dbReference>
<dbReference type="Pfam" id="PF01726">
    <property type="entry name" value="LexA_DNA_bind"/>
    <property type="match status" value="1"/>
</dbReference>
<dbReference type="Pfam" id="PF00717">
    <property type="entry name" value="Peptidase_S24"/>
    <property type="match status" value="1"/>
</dbReference>
<dbReference type="PRINTS" id="PR00726">
    <property type="entry name" value="LEXASERPTASE"/>
</dbReference>
<dbReference type="SUPFAM" id="SSF51306">
    <property type="entry name" value="LexA/Signal peptidase"/>
    <property type="match status" value="1"/>
</dbReference>
<dbReference type="SUPFAM" id="SSF46785">
    <property type="entry name" value="Winged helix' DNA-binding domain"/>
    <property type="match status" value="1"/>
</dbReference>
<evidence type="ECO:0000255" key="1">
    <source>
        <dbReference type="HAMAP-Rule" id="MF_00015"/>
    </source>
</evidence>
<keyword id="KW-0068">Autocatalytic cleavage</keyword>
<keyword id="KW-0227">DNA damage</keyword>
<keyword id="KW-0234">DNA repair</keyword>
<keyword id="KW-0235">DNA replication</keyword>
<keyword id="KW-0238">DNA-binding</keyword>
<keyword id="KW-0378">Hydrolase</keyword>
<keyword id="KW-0678">Repressor</keyword>
<keyword id="KW-0742">SOS response</keyword>
<keyword id="KW-0804">Transcription</keyword>
<keyword id="KW-0805">Transcription regulation</keyword>
<protein>
    <recommendedName>
        <fullName evidence="1">LexA repressor</fullName>
        <ecNumber evidence="1">3.4.21.88</ecNumber>
    </recommendedName>
</protein>